<keyword id="KW-0903">Direct protein sequencing</keyword>
<keyword id="KW-1043">Host membrane</keyword>
<keyword id="KW-0472">Membrane</keyword>
<keyword id="KW-0614">Plasmid</keyword>
<keyword id="KW-1185">Reference proteome</keyword>
<keyword id="KW-0964">Secreted</keyword>
<keyword id="KW-0812">Transmembrane</keyword>
<keyword id="KW-1133">Transmembrane helix</keyword>
<keyword id="KW-0843">Virulence</keyword>
<reference key="1">
    <citation type="journal article" date="1988" name="Proc. Natl. Acad. Sci. U.S.A.">
        <title>Characterization of invasion plasmid antigen genes (ipaBCD) from Shigella flexneri.</title>
        <authorList>
            <person name="Venkatesan M.M."/>
            <person name="Buysse J.M."/>
            <person name="Kopecko D.J."/>
        </authorList>
    </citation>
    <scope>NUCLEOTIDE SEQUENCE [GENOMIC DNA]</scope>
    <source>
        <strain>M90T / Serotype 5a</strain>
        <plasmid>pWR100</plasmid>
    </source>
</reference>
<reference key="2">
    <citation type="journal article" date="1988" name="Microb. Pathog.">
        <title>Nucleotide sequence of the invasion plasmid antigen B and C genes (ipaB and ipaC) of Shigella flexneri.</title>
        <authorList>
            <person name="Baudry B."/>
            <person name="Kaczorek M."/>
            <person name="Sansonetti P.J."/>
        </authorList>
    </citation>
    <scope>NUCLEOTIDE SEQUENCE [GENOMIC DNA]</scope>
    <source>
        <strain>M90T / Serotype 5a</strain>
        <plasmid>pWR100</plasmid>
    </source>
</reference>
<reference key="3">
    <citation type="journal article" date="2000" name="Mol. Microbiol.">
        <title>The virulence plasmid pWR100 and the repertoire of proteins secreted by the type III secretion apparatus of Shigella flexneri.</title>
        <authorList>
            <person name="Buchrieser C."/>
            <person name="Glaser P."/>
            <person name="Rusniok C."/>
            <person name="Nedjari H."/>
            <person name="d'Hauteville H."/>
            <person name="Kunst F."/>
            <person name="Sansonetti P.J."/>
            <person name="Parsot C."/>
        </authorList>
    </citation>
    <scope>NUCLEOTIDE SEQUENCE [GENOMIC DNA]</scope>
    <source>
        <strain>M90T / Serotype 5a</strain>
        <plasmid>pWR100</plasmid>
    </source>
</reference>
<reference key="4">
    <citation type="journal article" date="2001" name="Infect. Immun.">
        <title>Complete DNA sequence and analysis of the large virulence plasmid of Shigella flexneri.</title>
        <authorList>
            <person name="Venkatesan M.M."/>
            <person name="Goldberg M.B."/>
            <person name="Rose D.J."/>
            <person name="Grotbeck E.J."/>
            <person name="Burland V."/>
            <person name="Blattner F.R."/>
        </authorList>
    </citation>
    <scope>NUCLEOTIDE SEQUENCE [GENOMIC DNA]</scope>
    <source>
        <strain>M90T / Serotype 5a</strain>
        <plasmid>pWR501</plasmid>
    </source>
</reference>
<reference key="5">
    <citation type="journal article" date="1989" name="Mol. Microbiol.">
        <title>Functional organization and nucleotide sequence of virulence region-2 on the large virulence plasmid in Shigella flexneri 2a.</title>
        <authorList>
            <person name="Sasakawa C."/>
            <person name="Adler B."/>
            <person name="Tobe T."/>
            <person name="Okada N."/>
            <person name="Nagai S."/>
            <person name="Komatsu K."/>
            <person name="Yoshikawa M."/>
        </authorList>
    </citation>
    <scope>NUCLEOTIDE SEQUENCE [GENOMIC DNA]</scope>
    <source>
        <strain>YSH6000 / Serotype 2a</strain>
        <plasmid>pMYSH6000</plasmid>
    </source>
</reference>
<reference key="6">
    <citation type="journal article" date="2002" name="Nucleic Acids Res.">
        <title>Genome sequence of Shigella flexneri 2a: insights into pathogenicity through comparison with genomes of Escherichia coli K12 and O157.</title>
        <authorList>
            <person name="Jin Q."/>
            <person name="Yuan Z."/>
            <person name="Xu J."/>
            <person name="Wang Y."/>
            <person name="Shen Y."/>
            <person name="Lu W."/>
            <person name="Wang J."/>
            <person name="Liu H."/>
            <person name="Yang J."/>
            <person name="Yang F."/>
            <person name="Zhang X."/>
            <person name="Zhang J."/>
            <person name="Yang G."/>
            <person name="Wu H."/>
            <person name="Qu D."/>
            <person name="Dong J."/>
            <person name="Sun L."/>
            <person name="Xue Y."/>
            <person name="Zhao A."/>
            <person name="Gao Y."/>
            <person name="Zhu J."/>
            <person name="Kan B."/>
            <person name="Ding K."/>
            <person name="Chen S."/>
            <person name="Cheng H."/>
            <person name="Yao Z."/>
            <person name="He B."/>
            <person name="Chen R."/>
            <person name="Ma D."/>
            <person name="Qiang B."/>
            <person name="Wen Y."/>
            <person name="Hou Y."/>
            <person name="Yu J."/>
        </authorList>
    </citation>
    <scope>NUCLEOTIDE SEQUENCE [LARGE SCALE GENOMIC DNA]</scope>
    <source>
        <strain>301 / Serotype 2a</strain>
        <plasmid>pCP301</plasmid>
    </source>
</reference>
<reference key="7">
    <citation type="journal article" date="1989" name="Infect. Immun.">
        <title>Congo red-mediated regulation of levels of Shigella flexneri 2a membrane proteins.</title>
        <authorList>
            <person name="Sankaran K."/>
            <person name="Ramachandran V."/>
            <person name="Subrahmanyam Y.V.B.K."/>
            <person name="Rajarathnam S."/>
            <person name="Elango S."/>
            <person name="Roy R.K."/>
        </authorList>
    </citation>
    <scope>PROTEIN SEQUENCE OF 1-20; 30-45 AND 299-316</scope>
    <source>
        <strain>Serotype 2a</strain>
    </source>
</reference>
<reference key="8">
    <citation type="journal article" date="1997" name="FEBS Lett.">
        <title>Purification of IpaC, a protein involved in entry of Shigella flexneri into epithelial cells and characterization of its interaction with lipid membranes.</title>
        <authorList>
            <person name="De Geyter C."/>
            <person name="Vogt B."/>
            <person name="Benjelloun-Touimi Z."/>
            <person name="Sansonetti P.J."/>
            <person name="Ruysschaert J.M."/>
            <person name="Parsot C."/>
            <person name="Cabiaux V."/>
        </authorList>
    </citation>
    <scope>PROTEIN SEQUENCE OF 1-15</scope>
    <scope>SUBCELLULAR LOCATION</scope>
    <source>
        <strain>M90T / Serotype 5a</strain>
    </source>
</reference>
<reference key="9">
    <citation type="journal article" date="2000" name="Eur. J. Biochem.">
        <title>Characterization of the interaction of IpaB and IpaD, proteins required for entry of Shigella flexneri into epithelial cells, with a lipid membrane.</title>
        <authorList>
            <person name="De Geyter C."/>
            <person name="Wattiez R."/>
            <person name="Sansonetti P."/>
            <person name="Falmagne P."/>
            <person name="Ruysschaert J.M."/>
            <person name="Parsot C."/>
            <person name="Cabiaux V."/>
        </authorList>
    </citation>
    <scope>PROTEIN SEQUENCE OF 1-13</scope>
    <scope>ACTIVITY REGULATION</scope>
    <source>
        <strain>M90T / Serotype 5a</strain>
    </source>
</reference>
<reference key="10">
    <citation type="journal article" date="1994" name="Cell">
        <title>Extracellular association and cytoplasmic partitioning of the IpaB and IpaC invasins of S. flexneri.</title>
        <authorList>
            <person name="Menard R."/>
            <person name="Sansonetti P."/>
            <person name="Parsot C."/>
            <person name="Vasselon T."/>
        </authorList>
    </citation>
    <scope>INTERACTION WITH IPAB/SCTE AND IPGC</scope>
    <scope>SUBCELLULAR LOCATION</scope>
    <source>
        <strain>M90T / Serotype 5a</strain>
    </source>
</reference>
<reference key="11">
    <citation type="journal article" date="1999" name="J. Cell Biol.">
        <title>The tripartite type III secreton of Shigella flexneri inserts IpaB and IpaC into host membranes.</title>
        <authorList>
            <person name="Blocker A."/>
            <person name="Gounon P."/>
            <person name="Larquet E."/>
            <person name="Niebuhr K."/>
            <person name="Cabiaux V."/>
            <person name="Parsot C."/>
            <person name="Sansonetti P."/>
        </authorList>
    </citation>
    <scope>FUNCTION</scope>
    <scope>SUBUNIT</scope>
    <scope>SUBCELLULAR LOCATION</scope>
    <scope>DISRUPTION PHENOTYPE</scope>
</reference>
<reference key="12">
    <citation type="journal article" date="1999" name="Cell. Microbiol.">
        <title>The secreted IpaB and IpaC invasins and their cytoplasmic chaperone IpgC are required for intercellular dissemination of Shigella flexneri.</title>
        <authorList>
            <person name="Page A.L."/>
            <person name="Ohayon H."/>
            <person name="Sansonetti P.J."/>
            <person name="Parsot C."/>
        </authorList>
    </citation>
    <scope>FUNCTION IN DISSEMINATION</scope>
    <scope>INTERACTION WITH IPGC</scope>
    <source>
        <strain>M90T / Serotype 5a</strain>
    </source>
</reference>
<reference key="13">
    <citation type="journal article" date="2000" name="Cell. Microbiol.">
        <title>Bacterial signals and cell responses during Shigella entry into epithelial cells.</title>
        <authorList>
            <person name="Tran Van Nhieu G."/>
            <person name="Bourdet-Sicard R."/>
            <person name="Dumenil G."/>
            <person name="Blocker A."/>
            <person name="Sansonetti P.J."/>
        </authorList>
    </citation>
    <scope>REVIEW</scope>
</reference>
<reference key="14">
    <citation type="journal article" date="2007" name="Mol. Microbiol.">
        <title>The type III secretion system needle tip complex mediates host cell sensing and translocon insertion.</title>
        <authorList>
            <person name="Veenendaal A.K."/>
            <person name="Hodgkinson J.L."/>
            <person name="Schwarzer L."/>
            <person name="Stabat D."/>
            <person name="Zenk S.F."/>
            <person name="Blocker A.J."/>
        </authorList>
    </citation>
    <scope>FUNCTION</scope>
    <scope>SUBUNIT</scope>
    <scope>INTERACTION WITH IPAB/SCTE</scope>
    <scope>SUBCELLULAR LOCATION</scope>
</reference>
<reference key="15">
    <citation type="journal article" date="2008" name="Microb. Pathog.">
        <title>The C-terminus of IpaC is required for effector activities related to Shigella invasion of host cells.</title>
        <authorList>
            <person name="Terry C.M."/>
            <person name="Picking W.L."/>
            <person name="Birket S.E."/>
            <person name="Flentie K."/>
            <person name="Hoffman B.M."/>
            <person name="Barker J.R."/>
            <person name="Picking W.D."/>
        </authorList>
    </citation>
    <scope>FUNCTION</scope>
    <scope>DOMAIN</scope>
    <scope>MUTAGENESIS OF 344-ASP--ALA-363; SER-345; ILE-346; ASN-347; ALA-354; ILE-357 AND ARG-362</scope>
</reference>
<reference key="16">
    <citation type="journal article" date="2009" name="Infect. Immun.">
        <title>Liposomes recruit IpaC to the Shigella flexneri type III secretion apparatus needle as a final step in secretion induction.</title>
        <authorList>
            <person name="Epler C.R."/>
            <person name="Dickenson N.E."/>
            <person name="Olive A.J."/>
            <person name="Picking W.L."/>
            <person name="Picking W.D."/>
        </authorList>
    </citation>
    <scope>FUNCTION</scope>
    <scope>SUBCELLULAR LOCATION</scope>
</reference>
<reference key="17">
    <citation type="journal article" date="2010" name="J. Biol. Chem.">
        <title>Combination of two separate binding domains defines stoichiometry between type III secretion system chaperone IpgC and translocator protein IpaB.</title>
        <authorList>
            <person name="Lokareddy R.K."/>
            <person name="Lunelli M."/>
            <person name="Eilers B."/>
            <person name="Wolter V."/>
            <person name="Kolbe M."/>
        </authorList>
    </citation>
    <scope>INTERACTION WITH IPGC</scope>
</reference>
<reference key="18">
    <citation type="journal article" date="2018" name="FEMS Microbiol. Lett.">
        <title>Bacterial type III secretion systems: a complex device for the delivery of bacterial effector proteins into eukaryotic host cells.</title>
        <authorList>
            <person name="Wagner S."/>
            <person name="Grin I."/>
            <person name="Malmsheimer S."/>
            <person name="Singh N."/>
            <person name="Torres-Vargas C.E."/>
            <person name="Westerhausen S."/>
        </authorList>
    </citation>
    <scope>REVIEW</scope>
    <scope>NOMENCLATURE</scope>
    <scope>SUBUNIT</scope>
</reference>
<protein>
    <recommendedName>
        <fullName evidence="17">Type 3 secretion system translocon protein SctB</fullName>
        <shortName evidence="17">T3SS translocon protein SctB</shortName>
    </recommendedName>
    <alternativeName>
        <fullName>42 kDa antigen</fullName>
    </alternativeName>
    <alternativeName>
        <fullName>Invasin IpaC</fullName>
    </alternativeName>
    <alternativeName>
        <fullName evidence="13">Invasion plasmid antigen C</fullName>
    </alternativeName>
</protein>
<geneLocation type="plasmid">
    <name>pWR100</name>
</geneLocation>
<geneLocation type="plasmid">
    <name>pWR501</name>
</geneLocation>
<geneLocation type="plasmid">
    <name>pMYSH6000</name>
</geneLocation>
<geneLocation type="plasmid">
    <name>pCP301</name>
</geneLocation>
<gene>
    <name evidence="14" type="primary">sctB</name>
    <name evidence="15 16" type="synonym">ipaC</name>
    <name type="ordered locus">CP0127</name>
</gene>
<feature type="chain" id="PRO_0000219858" description="Type 3 secretion system translocon protein SctB">
    <location>
        <begin position="1"/>
        <end position="363"/>
    </location>
</feature>
<feature type="transmembrane region" description="Helical" evidence="1">
    <location>
        <begin position="99"/>
        <end position="120"/>
    </location>
</feature>
<feature type="region of interest" description="Disordered" evidence="2">
    <location>
        <begin position="1"/>
        <end position="30"/>
    </location>
</feature>
<feature type="region of interest" description="IpgC chaperone binding domain" evidence="18">
    <location>
        <begin position="33"/>
        <end position="73"/>
    </location>
</feature>
<feature type="compositionally biased region" description="Polar residues" evidence="2">
    <location>
        <begin position="1"/>
        <end position="16"/>
    </location>
</feature>
<feature type="compositionally biased region" description="Low complexity" evidence="2">
    <location>
        <begin position="17"/>
        <end position="30"/>
    </location>
</feature>
<feature type="sequence variant" description="In plasmid pMYSH6000 and plasmid pCP301.">
    <original>T</original>
    <variation>I</variation>
    <location>
        <position position="11"/>
    </location>
</feature>
<feature type="sequence variant" description="In plasmid pCP301.">
    <original>L</original>
    <variation>R</variation>
    <location>
        <position position="84"/>
    </location>
</feature>
<feature type="sequence variant" description="In plasmid pMYSH6000 and plasmid pCP301.">
    <original>A</original>
    <variation>T</variation>
    <location>
        <position position="353"/>
    </location>
</feature>
<feature type="mutagenesis site" description="Abolishes in vivo invasion and in vitro nucleation activity, but has no effect on the contact-hemolysis activity." evidence="7">
    <location>
        <begin position="344"/>
        <end position="363"/>
    </location>
</feature>
<feature type="mutagenesis site" description="Significant loss in invasion ability." evidence="7">
    <original>S</original>
    <variation>A</variation>
    <location>
        <position position="345"/>
    </location>
</feature>
<feature type="mutagenesis site" description="Significant loss in invasion ability." evidence="7">
    <original>I</original>
    <variation>S</variation>
    <location>
        <position position="346"/>
    </location>
</feature>
<feature type="mutagenesis site" description="Significant loss in invasion ability." evidence="7">
    <original>N</original>
    <variation>L</variation>
    <location>
        <position position="347"/>
    </location>
</feature>
<feature type="mutagenesis site" description="Significant loss in invasion ability." evidence="7">
    <original>A</original>
    <variation>L</variation>
    <location>
        <position position="354"/>
    </location>
</feature>
<feature type="mutagenesis site" description="Significant loss in invasion ability." evidence="7">
    <original>I</original>
    <variation>S</variation>
    <location>
        <position position="357"/>
    </location>
</feature>
<feature type="mutagenesis site" description="Retains 32% of invasion activity." evidence="7">
    <original>R</original>
    <variation>E</variation>
    <location>
        <position position="362"/>
    </location>
</feature>
<feature type="mutagenesis site" description="Increases invasion activity." evidence="7">
    <original>R</original>
    <variation>K</variation>
    <location>
        <position position="362"/>
    </location>
</feature>
<feature type="mutagenesis site" description="Retains 66% of invasion activity." evidence="7">
    <original>R</original>
    <variation>M</variation>
    <location>
        <position position="362"/>
    </location>
</feature>
<feature type="mutagenesis site" description="Retains 3% of invasion activity." evidence="7">
    <original>R</original>
    <variation>W</variation>
    <location>
        <position position="362"/>
    </location>
</feature>
<feature type="sequence conflict" description="In Ref. 7; AA sequence." evidence="17" ref="7">
    <original>S</original>
    <variation>E</variation>
    <location>
        <position position="17"/>
    </location>
</feature>
<feature type="sequence conflict" description="In Ref. 7; AA sequence." evidence="17" ref="7">
    <original>Q</original>
    <variation>E</variation>
    <location>
        <position position="20"/>
    </location>
</feature>
<sequence>MEIQNTKPTQTLYTDISTKQTQSSSETQKSQNYQQIAAHIPLNVGKNPVLTTTLNDDQLLKLSEQVQHDSEIIARLTDKKMKDLSEMSHTLTPENTLDISSLSSNAVSLIISVAVLLSALRTAETKLGSQLSLIAFDATKSAAENIVRQGLAALSSSITGAVTQVGITGIGAKKTHSGISDQKGALRKNLATAQSLEKELAGSKLGLNKQIDTNITSPQTNSSTKFLGKNKLAPDNISLSTEHKTSLSSPDISLQDKIDTQRRTYELNTLSAQQKQNIGRATMETSAVAGNISTSGGRYASALEEEEQLISQASSKQAEEASQVSKEASQATNQLIQKLLNIIDSINQSKNSAASQIAGNIRA</sequence>
<comment type="function">
    <text evidence="3 6 8">Component of the type III secretion system (T3SS), also called injectisome, which is used to inject bacterial effector proteins into eukaryotic host cells (PubMed:10545510, PubMed:17367391). IpaB/SctE and IpaC/SctB are inserted into the host membrane where they form a pore and allow the translocation of effector proteins into the cytosol of target cells (PubMed:10545510, PubMed:17367391). Induction and secretion of IpaC/SctB comprise the final step in triggering the induction of full type III secretion (PubMed:19433542).</text>
</comment>
<comment type="function">
    <text evidence="5 7">Required for efficient dissemination (PubMed:11207551). Necessary for lysis of the two cellular membranes that surround bacteria in protrusions during cell-to-cell spread (PubMed:11207551). Contribute to actin nucleation in vitro, which may be a necessary step in Shigella invasion (PubMed:18656530).</text>
</comment>
<comment type="activity regulation">
    <text evidence="4">Interaction with the membrane is affected by the pH.</text>
</comment>
<comment type="subunit">
    <text evidence="3 5 6 7 9 10 11">The core secretion machinery of the T3SS is composed of approximately 20 different proteins, including cytoplasmic components, a base, an export apparatus and a needle (PubMed:30107569). This subunit is involved in the formation of a pore, called the translocon, in host membrane (PubMed:10545510, PubMed:17367391). Interacts with IpaB/SctE (PubMed:10545510, PubMed:17367391, PubMed:7954817). Interacts with the molecular chaperone IpgC, which prevents premature association with IpaB/SctE within the cytoplasm of Shigella cells (PubMed:11207551, PubMed:20937829, PubMed:7954817). Does not interact with CDC42 or RAC1 GTPases in vitro (PubMed:18656530).</text>
</comment>
<comment type="interaction">
    <interactant intactId="EBI-491541">
        <id>P18012</id>
    </interactant>
    <interactant intactId="EBI-491549">
        <id>P35222</id>
        <label>CTNNB1</label>
    </interactant>
    <organismsDiffer>true</organismsDiffer>
    <experiments>4</experiments>
</comment>
<comment type="subcellular location">
    <subcellularLocation>
        <location evidence="3 11 12">Secreted</location>
    </subcellularLocation>
    <subcellularLocation>
        <location evidence="3 19">Host membrane</location>
        <topology evidence="1">Single-pass membrane protein</topology>
    </subcellularLocation>
    <text evidence="3 6 8">Secreted via the type III secretion system (T3SS) (PubMed:10545510). Localizes at needle tips (PubMed:17367391, PubMed:19433542). IpaB/SctE and IpaC/SctB form a multimeric integral membrane complex in eukaryotic cell membranes (PubMed:17367391).</text>
</comment>
<comment type="induction">
    <text>Synthesis of this immunogen is repressed at 30 degrees Celsius and restored at 37 degrees Celsius.</text>
</comment>
<comment type="domain">
    <text evidence="7">The C-terminal tail is required specifically for Shigella invasiveness, but not for pore formation (PubMed:18656530). The C-terminal tail is responsible for IpaC/SctB-induced actin nucleation (PubMed:18656530).</text>
</comment>
<comment type="disruption phenotype">
    <text evidence="3">Mutant retains 10% of hemolytic activity in the presence of sheep red blood cell (RBC) (PubMed:10545510). Mutant displays normal secretons (PubMed:10545510).</text>
</comment>
<comment type="similarity">
    <text evidence="17">Belongs to the SctB/SipC family.</text>
</comment>
<comment type="sequence caution" evidence="17">
    <conflict type="erroneous initiation">
        <sequence resource="EMBL-CDS" id="AAA26523"/>
    </conflict>
    <text>Extended N-terminus.</text>
</comment>
<comment type="sequence caution" evidence="17">
    <conflict type="erroneous initiation">
        <sequence resource="EMBL-CDS" id="AAK18445"/>
    </conflict>
    <text>Extended N-terminus.</text>
</comment>
<comment type="sequence caution" evidence="17">
    <conflict type="erroneous initiation">
        <sequence resource="EMBL-CDS" id="CAA33382"/>
    </conflict>
    <text>Extended N-terminus.</text>
</comment>
<organism>
    <name type="scientific">Shigella flexneri</name>
    <dbReference type="NCBI Taxonomy" id="623"/>
    <lineage>
        <taxon>Bacteria</taxon>
        <taxon>Pseudomonadati</taxon>
        <taxon>Pseudomonadota</taxon>
        <taxon>Gammaproteobacteria</taxon>
        <taxon>Enterobacterales</taxon>
        <taxon>Enterobacteriaceae</taxon>
        <taxon>Shigella</taxon>
    </lineage>
</organism>
<accession>P18012</accession>
<accession>Q8VSH7</accession>
<accession>Q9AJW2</accession>
<name>SCTB_SHIFL</name>
<evidence type="ECO:0000255" key="1"/>
<evidence type="ECO:0000256" key="2">
    <source>
        <dbReference type="SAM" id="MobiDB-lite"/>
    </source>
</evidence>
<evidence type="ECO:0000269" key="3">
    <source>
    </source>
</evidence>
<evidence type="ECO:0000269" key="4">
    <source>
    </source>
</evidence>
<evidence type="ECO:0000269" key="5">
    <source>
    </source>
</evidence>
<evidence type="ECO:0000269" key="6">
    <source>
    </source>
</evidence>
<evidence type="ECO:0000269" key="7">
    <source>
    </source>
</evidence>
<evidence type="ECO:0000269" key="8">
    <source>
    </source>
</evidence>
<evidence type="ECO:0000269" key="9">
    <source>
    </source>
</evidence>
<evidence type="ECO:0000269" key="10">
    <source>
    </source>
</evidence>
<evidence type="ECO:0000269" key="11">
    <source>
    </source>
</evidence>
<evidence type="ECO:0000269" key="12">
    <source>
    </source>
</evidence>
<evidence type="ECO:0000303" key="13">
    <source>
    </source>
</evidence>
<evidence type="ECO:0000303" key="14">
    <source>
    </source>
</evidence>
<evidence type="ECO:0000303" key="15">
    <source>
    </source>
</evidence>
<evidence type="ECO:0000303" key="16">
    <source>
    </source>
</evidence>
<evidence type="ECO:0000305" key="17"/>
<evidence type="ECO:0000305" key="18">
    <source>
    </source>
</evidence>
<evidence type="ECO:0000305" key="19">
    <source>
    </source>
</evidence>
<dbReference type="EMBL" id="J04117">
    <property type="protein sequence ID" value="AAA26523.1"/>
    <property type="status" value="ALT_INIT"/>
    <property type="molecule type" value="Genomic_DNA"/>
</dbReference>
<dbReference type="EMBL" id="M34849">
    <property type="protein sequence ID" value="AAA98425.1"/>
    <property type="molecule type" value="Genomic_DNA"/>
</dbReference>
<dbReference type="EMBL" id="AL391753">
    <property type="protein sequence ID" value="CAC05802.1"/>
    <property type="molecule type" value="Genomic_DNA"/>
</dbReference>
<dbReference type="EMBL" id="AF348706">
    <property type="protein sequence ID" value="AAK18445.1"/>
    <property type="status" value="ALT_INIT"/>
    <property type="molecule type" value="Genomic_DNA"/>
</dbReference>
<dbReference type="EMBL" id="X15319">
    <property type="protein sequence ID" value="CAA33382.1"/>
    <property type="status" value="ALT_INIT"/>
    <property type="molecule type" value="Genomic_DNA"/>
</dbReference>
<dbReference type="EMBL" id="AF386526">
    <property type="protein sequence ID" value="AAL72351.2"/>
    <property type="molecule type" value="Genomic_DNA"/>
</dbReference>
<dbReference type="PIR" id="C31265">
    <property type="entry name" value="A60112"/>
</dbReference>
<dbReference type="RefSeq" id="NP_858260.2">
    <property type="nucleotide sequence ID" value="NC_004851.1"/>
</dbReference>
<dbReference type="RefSeq" id="WP_010921662.1">
    <property type="nucleotide sequence ID" value="NZ_QWST01000007.1"/>
</dbReference>
<dbReference type="RefSeq" id="YP_009062484.1">
    <property type="nucleotide sequence ID" value="NC_024996.1"/>
</dbReference>
<dbReference type="SMR" id="P18012"/>
<dbReference type="IntAct" id="P18012">
    <property type="interactions" value="1"/>
</dbReference>
<dbReference type="TCDB" id="1.C.36.3.1">
    <property type="family name" value="the bacterial type iii-target cell pore (iiitcp) family"/>
</dbReference>
<dbReference type="PaxDb" id="198214-CP0127"/>
<dbReference type="GeneID" id="1238054"/>
<dbReference type="KEGG" id="sfl:CP0127"/>
<dbReference type="PATRIC" id="fig|198214.7.peg.5382"/>
<dbReference type="HOGENOM" id="CLU_723395_0_0_6"/>
<dbReference type="Proteomes" id="UP000001006">
    <property type="component" value="Plasmid pCP301"/>
</dbReference>
<dbReference type="GO" id="GO:0005576">
    <property type="term" value="C:extracellular region"/>
    <property type="evidence" value="ECO:0007669"/>
    <property type="project" value="UniProtKB-SubCell"/>
</dbReference>
<dbReference type="GO" id="GO:0033644">
    <property type="term" value="C:host cell membrane"/>
    <property type="evidence" value="ECO:0007669"/>
    <property type="project" value="UniProtKB-SubCell"/>
</dbReference>
<dbReference type="GO" id="GO:0016020">
    <property type="term" value="C:membrane"/>
    <property type="evidence" value="ECO:0007669"/>
    <property type="project" value="UniProtKB-KW"/>
</dbReference>
<dbReference type="InterPro" id="IPR005427">
    <property type="entry name" value="BipC/SctB"/>
</dbReference>
<dbReference type="NCBIfam" id="TIGR02101">
    <property type="entry name" value="IpaC_SipC"/>
    <property type="match status" value="1"/>
</dbReference>
<dbReference type="NCBIfam" id="NF038055">
    <property type="entry name" value="T3SS_SctB_pilot"/>
    <property type="match status" value="1"/>
</dbReference>
<dbReference type="Pfam" id="PF09599">
    <property type="entry name" value="IpaC_SipC"/>
    <property type="match status" value="1"/>
</dbReference>
<dbReference type="PRINTS" id="PR01608">
    <property type="entry name" value="BACINVASINC"/>
</dbReference>
<proteinExistence type="evidence at protein level"/>